<protein>
    <recommendedName>
        <fullName evidence="1">Protein ApaG</fullName>
    </recommendedName>
</protein>
<evidence type="ECO:0000255" key="1">
    <source>
        <dbReference type="HAMAP-Rule" id="MF_00791"/>
    </source>
</evidence>
<organism>
    <name type="scientific">Escherichia coli O45:K1 (strain S88 / ExPEC)</name>
    <dbReference type="NCBI Taxonomy" id="585035"/>
    <lineage>
        <taxon>Bacteria</taxon>
        <taxon>Pseudomonadati</taxon>
        <taxon>Pseudomonadota</taxon>
        <taxon>Gammaproteobacteria</taxon>
        <taxon>Enterobacterales</taxon>
        <taxon>Enterobacteriaceae</taxon>
        <taxon>Escherichia</taxon>
    </lineage>
</organism>
<sequence>MINSPRVCIQVQSVYIEAQSSPDNERYVFAYTVTIRNLGRAPVQLLGRYWLITNGNGRETEVQGEGVVGVQPLIAPGEEYQYTSGAIIETPLGTMQGHYEMIDENGVPFSIDIPVFRLAVPTLIH</sequence>
<proteinExistence type="inferred from homology"/>
<accession>B7MAH5</accession>
<feature type="chain" id="PRO_1000133783" description="Protein ApaG">
    <location>
        <begin position="1"/>
        <end position="125"/>
    </location>
</feature>
<feature type="domain" description="ApaG" evidence="1">
    <location>
        <begin position="1"/>
        <end position="125"/>
    </location>
</feature>
<gene>
    <name evidence="1" type="primary">apaG</name>
    <name type="ordered locus">ECS88_0055</name>
</gene>
<dbReference type="EMBL" id="CU928161">
    <property type="protein sequence ID" value="CAR01421.1"/>
    <property type="molecule type" value="Genomic_DNA"/>
</dbReference>
<dbReference type="RefSeq" id="WP_000610901.1">
    <property type="nucleotide sequence ID" value="NC_011742.1"/>
</dbReference>
<dbReference type="SMR" id="B7MAH5"/>
<dbReference type="GeneID" id="93777385"/>
<dbReference type="KEGG" id="ecz:ECS88_0055"/>
<dbReference type="HOGENOM" id="CLU_128074_0_0_6"/>
<dbReference type="Proteomes" id="UP000000747">
    <property type="component" value="Chromosome"/>
</dbReference>
<dbReference type="GO" id="GO:0070987">
    <property type="term" value="P:error-free translesion synthesis"/>
    <property type="evidence" value="ECO:0007669"/>
    <property type="project" value="TreeGrafter"/>
</dbReference>
<dbReference type="Gene3D" id="2.60.40.1470">
    <property type="entry name" value="ApaG domain"/>
    <property type="match status" value="1"/>
</dbReference>
<dbReference type="HAMAP" id="MF_00791">
    <property type="entry name" value="ApaG"/>
    <property type="match status" value="1"/>
</dbReference>
<dbReference type="InterPro" id="IPR007474">
    <property type="entry name" value="ApaG_domain"/>
</dbReference>
<dbReference type="InterPro" id="IPR036767">
    <property type="entry name" value="ApaG_sf"/>
</dbReference>
<dbReference type="InterPro" id="IPR023065">
    <property type="entry name" value="Uncharacterised_ApaG"/>
</dbReference>
<dbReference type="NCBIfam" id="NF003967">
    <property type="entry name" value="PRK05461.1"/>
    <property type="match status" value="1"/>
</dbReference>
<dbReference type="PANTHER" id="PTHR14289">
    <property type="entry name" value="F-BOX ONLY PROTEIN 3"/>
    <property type="match status" value="1"/>
</dbReference>
<dbReference type="PANTHER" id="PTHR14289:SF16">
    <property type="entry name" value="POLYMERASE DELTA-INTERACTING PROTEIN 2"/>
    <property type="match status" value="1"/>
</dbReference>
<dbReference type="Pfam" id="PF04379">
    <property type="entry name" value="DUF525"/>
    <property type="match status" value="1"/>
</dbReference>
<dbReference type="SUPFAM" id="SSF110069">
    <property type="entry name" value="ApaG-like"/>
    <property type="match status" value="1"/>
</dbReference>
<dbReference type="PROSITE" id="PS51087">
    <property type="entry name" value="APAG"/>
    <property type="match status" value="1"/>
</dbReference>
<keyword id="KW-1185">Reference proteome</keyword>
<name>APAG_ECO45</name>
<reference key="1">
    <citation type="journal article" date="2009" name="PLoS Genet.">
        <title>Organised genome dynamics in the Escherichia coli species results in highly diverse adaptive paths.</title>
        <authorList>
            <person name="Touchon M."/>
            <person name="Hoede C."/>
            <person name="Tenaillon O."/>
            <person name="Barbe V."/>
            <person name="Baeriswyl S."/>
            <person name="Bidet P."/>
            <person name="Bingen E."/>
            <person name="Bonacorsi S."/>
            <person name="Bouchier C."/>
            <person name="Bouvet O."/>
            <person name="Calteau A."/>
            <person name="Chiapello H."/>
            <person name="Clermont O."/>
            <person name="Cruveiller S."/>
            <person name="Danchin A."/>
            <person name="Diard M."/>
            <person name="Dossat C."/>
            <person name="Karoui M.E."/>
            <person name="Frapy E."/>
            <person name="Garry L."/>
            <person name="Ghigo J.M."/>
            <person name="Gilles A.M."/>
            <person name="Johnson J."/>
            <person name="Le Bouguenec C."/>
            <person name="Lescat M."/>
            <person name="Mangenot S."/>
            <person name="Martinez-Jehanne V."/>
            <person name="Matic I."/>
            <person name="Nassif X."/>
            <person name="Oztas S."/>
            <person name="Petit M.A."/>
            <person name="Pichon C."/>
            <person name="Rouy Z."/>
            <person name="Ruf C.S."/>
            <person name="Schneider D."/>
            <person name="Tourret J."/>
            <person name="Vacherie B."/>
            <person name="Vallenet D."/>
            <person name="Medigue C."/>
            <person name="Rocha E.P.C."/>
            <person name="Denamur E."/>
        </authorList>
    </citation>
    <scope>NUCLEOTIDE SEQUENCE [LARGE SCALE GENOMIC DNA]</scope>
    <source>
        <strain>S88 / ExPEC</strain>
    </source>
</reference>